<organism>
    <name type="scientific">Borrelia garinii subsp. bavariensis (strain ATCC BAA-2496 / DSM 23469 / PBi)</name>
    <name type="common">Borreliella bavariensis</name>
    <dbReference type="NCBI Taxonomy" id="290434"/>
    <lineage>
        <taxon>Bacteria</taxon>
        <taxon>Pseudomonadati</taxon>
        <taxon>Spirochaetota</taxon>
        <taxon>Spirochaetia</taxon>
        <taxon>Spirochaetales</taxon>
        <taxon>Borreliaceae</taxon>
        <taxon>Borreliella</taxon>
    </lineage>
</organism>
<reference key="1">
    <citation type="journal article" date="2004" name="Nucleic Acids Res.">
        <title>Comparative analysis of the Borrelia garinii genome.</title>
        <authorList>
            <person name="Gloeckner G."/>
            <person name="Lehmann R."/>
            <person name="Romualdi A."/>
            <person name="Pradella S."/>
            <person name="Schulte-Spechtel U."/>
            <person name="Schilhabel M."/>
            <person name="Wilske B."/>
            <person name="Suehnel J."/>
            <person name="Platzer M."/>
        </authorList>
    </citation>
    <scope>NUCLEOTIDE SEQUENCE [LARGE SCALE GENOMIC DNA]</scope>
    <source>
        <strain>ATCC BAA-2496 / DSM 23469 / PBi</strain>
    </source>
</reference>
<dbReference type="EC" id="2.7.8.13" evidence="1"/>
<dbReference type="EMBL" id="CP000013">
    <property type="protein sequence ID" value="AAU07160.1"/>
    <property type="molecule type" value="Genomic_DNA"/>
</dbReference>
<dbReference type="RefSeq" id="WP_011193636.1">
    <property type="nucleotide sequence ID" value="NZ_CP028872.1"/>
</dbReference>
<dbReference type="SMR" id="Q661W1"/>
<dbReference type="GeneID" id="45161096"/>
<dbReference type="KEGG" id="bga:BG0307"/>
<dbReference type="eggNOG" id="COG0472">
    <property type="taxonomic scope" value="Bacteria"/>
</dbReference>
<dbReference type="HOGENOM" id="CLU_023982_0_0_12"/>
<dbReference type="OrthoDB" id="9805475at2"/>
<dbReference type="UniPathway" id="UPA00219"/>
<dbReference type="Proteomes" id="UP000002276">
    <property type="component" value="Chromosome"/>
</dbReference>
<dbReference type="GO" id="GO:0005886">
    <property type="term" value="C:plasma membrane"/>
    <property type="evidence" value="ECO:0007669"/>
    <property type="project" value="UniProtKB-SubCell"/>
</dbReference>
<dbReference type="GO" id="GO:0046872">
    <property type="term" value="F:metal ion binding"/>
    <property type="evidence" value="ECO:0007669"/>
    <property type="project" value="UniProtKB-KW"/>
</dbReference>
<dbReference type="GO" id="GO:0008963">
    <property type="term" value="F:phospho-N-acetylmuramoyl-pentapeptide-transferase activity"/>
    <property type="evidence" value="ECO:0007669"/>
    <property type="project" value="UniProtKB-UniRule"/>
</dbReference>
<dbReference type="GO" id="GO:0051992">
    <property type="term" value="F:UDP-N-acetylmuramoyl-L-alanyl-D-glutamyl-meso-2,6-diaminopimelyl-D-alanyl-D-alanine:undecaprenyl-phosphate transferase activity"/>
    <property type="evidence" value="ECO:0007669"/>
    <property type="project" value="RHEA"/>
</dbReference>
<dbReference type="GO" id="GO:0051301">
    <property type="term" value="P:cell division"/>
    <property type="evidence" value="ECO:0007669"/>
    <property type="project" value="UniProtKB-KW"/>
</dbReference>
<dbReference type="GO" id="GO:0071555">
    <property type="term" value="P:cell wall organization"/>
    <property type="evidence" value="ECO:0007669"/>
    <property type="project" value="UniProtKB-KW"/>
</dbReference>
<dbReference type="GO" id="GO:0009252">
    <property type="term" value="P:peptidoglycan biosynthetic process"/>
    <property type="evidence" value="ECO:0007669"/>
    <property type="project" value="UniProtKB-UniRule"/>
</dbReference>
<dbReference type="GO" id="GO:0008360">
    <property type="term" value="P:regulation of cell shape"/>
    <property type="evidence" value="ECO:0007669"/>
    <property type="project" value="UniProtKB-KW"/>
</dbReference>
<dbReference type="CDD" id="cd06852">
    <property type="entry name" value="GT_MraY"/>
    <property type="match status" value="1"/>
</dbReference>
<dbReference type="HAMAP" id="MF_00038">
    <property type="entry name" value="MraY"/>
    <property type="match status" value="1"/>
</dbReference>
<dbReference type="InterPro" id="IPR000715">
    <property type="entry name" value="Glycosyl_transferase_4"/>
</dbReference>
<dbReference type="InterPro" id="IPR003524">
    <property type="entry name" value="PNAcMuramoyl-5peptid_Trfase"/>
</dbReference>
<dbReference type="InterPro" id="IPR018480">
    <property type="entry name" value="PNAcMuramoyl-5peptid_Trfase_CS"/>
</dbReference>
<dbReference type="NCBIfam" id="TIGR00445">
    <property type="entry name" value="mraY"/>
    <property type="match status" value="1"/>
</dbReference>
<dbReference type="PANTHER" id="PTHR22926">
    <property type="entry name" value="PHOSPHO-N-ACETYLMURAMOYL-PENTAPEPTIDE-TRANSFERASE"/>
    <property type="match status" value="1"/>
</dbReference>
<dbReference type="PANTHER" id="PTHR22926:SF5">
    <property type="entry name" value="PHOSPHO-N-ACETYLMURAMOYL-PENTAPEPTIDE-TRANSFERASE HOMOLOG"/>
    <property type="match status" value="1"/>
</dbReference>
<dbReference type="Pfam" id="PF00953">
    <property type="entry name" value="Glycos_transf_4"/>
    <property type="match status" value="1"/>
</dbReference>
<dbReference type="Pfam" id="PF10555">
    <property type="entry name" value="MraY_sig1"/>
    <property type="match status" value="1"/>
</dbReference>
<dbReference type="PROSITE" id="PS01347">
    <property type="entry name" value="MRAY_1"/>
    <property type="match status" value="1"/>
</dbReference>
<dbReference type="PROSITE" id="PS01348">
    <property type="entry name" value="MRAY_2"/>
    <property type="match status" value="1"/>
</dbReference>
<name>MRAY_BORGP</name>
<accession>Q661W1</accession>
<feature type="chain" id="PRO_0000108791" description="Phospho-N-acetylmuramoyl-pentapeptide-transferase">
    <location>
        <begin position="1"/>
        <end position="351"/>
    </location>
</feature>
<feature type="transmembrane region" description="Helical" evidence="1">
    <location>
        <begin position="17"/>
        <end position="37"/>
    </location>
</feature>
<feature type="transmembrane region" description="Helical" evidence="1">
    <location>
        <begin position="62"/>
        <end position="82"/>
    </location>
</feature>
<feature type="transmembrane region" description="Helical" evidence="1">
    <location>
        <begin position="85"/>
        <end position="105"/>
    </location>
</feature>
<feature type="transmembrane region" description="Helical" evidence="1">
    <location>
        <begin position="124"/>
        <end position="144"/>
    </location>
</feature>
<feature type="transmembrane region" description="Helical" evidence="1">
    <location>
        <begin position="161"/>
        <end position="181"/>
    </location>
</feature>
<feature type="transmembrane region" description="Helical" evidence="1">
    <location>
        <begin position="190"/>
        <end position="210"/>
    </location>
</feature>
<feature type="transmembrane region" description="Helical" evidence="1">
    <location>
        <begin position="230"/>
        <end position="250"/>
    </location>
</feature>
<feature type="transmembrane region" description="Helical" evidence="1">
    <location>
        <begin position="254"/>
        <end position="274"/>
    </location>
</feature>
<feature type="transmembrane region" description="Helical" evidence="1">
    <location>
        <begin position="279"/>
        <end position="299"/>
    </location>
</feature>
<feature type="transmembrane region" description="Helical" evidence="1">
    <location>
        <begin position="328"/>
        <end position="348"/>
    </location>
</feature>
<evidence type="ECO:0000255" key="1">
    <source>
        <dbReference type="HAMAP-Rule" id="MF_00038"/>
    </source>
</evidence>
<keyword id="KW-0131">Cell cycle</keyword>
<keyword id="KW-0132">Cell division</keyword>
<keyword id="KW-0997">Cell inner membrane</keyword>
<keyword id="KW-1003">Cell membrane</keyword>
<keyword id="KW-0133">Cell shape</keyword>
<keyword id="KW-0961">Cell wall biogenesis/degradation</keyword>
<keyword id="KW-0460">Magnesium</keyword>
<keyword id="KW-0472">Membrane</keyword>
<keyword id="KW-0479">Metal-binding</keyword>
<keyword id="KW-0573">Peptidoglycan synthesis</keyword>
<keyword id="KW-0808">Transferase</keyword>
<keyword id="KW-0812">Transmembrane</keyword>
<keyword id="KW-1133">Transmembrane helix</keyword>
<proteinExistence type="inferred from homology"/>
<protein>
    <recommendedName>
        <fullName evidence="1">Phospho-N-acetylmuramoyl-pentapeptide-transferase</fullName>
        <ecNumber evidence="1">2.7.8.13</ecNumber>
    </recommendedName>
    <alternativeName>
        <fullName evidence="1">UDP-MurNAc-pentapeptide phosphotransferase</fullName>
    </alternativeName>
</protein>
<gene>
    <name evidence="1" type="primary">mraY</name>
    <name type="ordered locus">BG0307</name>
</gene>
<comment type="function">
    <text evidence="1">Catalyzes the initial step of the lipid cycle reactions in the biosynthesis of the cell wall peptidoglycan: transfers peptidoglycan precursor phospho-MurNAc-pentapeptide from UDP-MurNAc-pentapeptide onto the lipid carrier undecaprenyl phosphate, yielding undecaprenyl-pyrophosphoryl-MurNAc-pentapeptide, known as lipid I.</text>
</comment>
<comment type="catalytic activity">
    <reaction evidence="1">
        <text>UDP-N-acetyl-alpha-D-muramoyl-L-alanyl-gamma-D-glutamyl-meso-2,6-diaminopimeloyl-D-alanyl-D-alanine + di-trans,octa-cis-undecaprenyl phosphate = di-trans,octa-cis-undecaprenyl diphospho-N-acetyl-alpha-D-muramoyl-L-alanyl-D-glutamyl-meso-2,6-diaminopimeloyl-D-alanyl-D-alanine + UMP</text>
        <dbReference type="Rhea" id="RHEA:28386"/>
        <dbReference type="ChEBI" id="CHEBI:57865"/>
        <dbReference type="ChEBI" id="CHEBI:60392"/>
        <dbReference type="ChEBI" id="CHEBI:61386"/>
        <dbReference type="ChEBI" id="CHEBI:61387"/>
        <dbReference type="EC" id="2.7.8.13"/>
    </reaction>
</comment>
<comment type="cofactor">
    <cofactor evidence="1">
        <name>Mg(2+)</name>
        <dbReference type="ChEBI" id="CHEBI:18420"/>
    </cofactor>
</comment>
<comment type="pathway">
    <text evidence="1">Cell wall biogenesis; peptidoglycan biosynthesis.</text>
</comment>
<comment type="subcellular location">
    <subcellularLocation>
        <location evidence="1">Cell inner membrane</location>
        <topology evidence="1">Multi-pass membrane protein</topology>
    </subcellularLocation>
</comment>
<comment type="similarity">
    <text evidence="1">Belongs to the glycosyltransferase 4 family. MraY subfamily.</text>
</comment>
<sequence length="351" mass="39572">MFYLLGLRLLKYITFRMAYATIFAFLLSLIIGPHIILRLKKLRVDQVLREDGPKRHLSEKAGIPTMGGILIFFCVFISLVFWSNILNVYFLIMLFVMLGFAFLGFIDDFLKIKKKTSDGLKARFKIYGQIIFSFISVGTLYYFGSEHVSMIYFPFIKSFRIDLGLFYIPFGMFILISASNSFNLTDGLDGLAIGLSIVITGALIIIAYLTSRADFAAYLHIPNIKGSEELVIFLGALLGGSFGFLWFNAYPAKIMMGDTGSLALGAILGMAALIVKSEILFSILAGVFIIETMSVIIQVMVYKKTKKRVFKMAPLHHHFEELGWSEMQVVIRFWIIGLIFAIIALSTIKIR</sequence>